<keyword id="KW-0002">3D-structure</keyword>
<keyword id="KW-0007">Acetylation</keyword>
<keyword id="KW-0963">Cytoplasm</keyword>
<keyword id="KW-1017">Isopeptide bond</keyword>
<keyword id="KW-0597">Phosphoprotein</keyword>
<keyword id="KW-1185">Reference proteome</keyword>
<keyword id="KW-0687">Ribonucleoprotein</keyword>
<keyword id="KW-0689">Ribosomal protein</keyword>
<keyword id="KW-0832">Ubl conjugation</keyword>
<feature type="initiator methionine" description="Removed" evidence="1">
    <location>
        <position position="1"/>
    </location>
</feature>
<feature type="chain" id="PRO_0000240293" description="Small ribosomal subunit protein uS10">
    <location>
        <begin position="2"/>
        <end position="119"/>
    </location>
</feature>
<feature type="modified residue" description="N-acetylalanine" evidence="1">
    <location>
        <position position="2"/>
    </location>
</feature>
<feature type="modified residue" description="N6-succinyllysine; alternate" evidence="2">
    <location>
        <position position="8"/>
    </location>
</feature>
<feature type="modified residue" description="Phosphothreonine" evidence="1">
    <location>
        <position position="9"/>
    </location>
</feature>
<feature type="modified residue" description="N6-acetyllysine" evidence="2">
    <location>
        <position position="34"/>
    </location>
</feature>
<feature type="modified residue" description="N6-acetyllysine" evidence="2">
    <location>
        <position position="75"/>
    </location>
</feature>
<feature type="modified residue" description="Phosphoserine" evidence="1">
    <location>
        <position position="93"/>
    </location>
</feature>
<feature type="cross-link" description="Glycyl lysine isopeptide (Lys-Gly) (interchain with G-Cter in ubiquitin)" evidence="1">
    <location>
        <position position="4"/>
    </location>
</feature>
<feature type="cross-link" description="Glycyl lysine isopeptide (Lys-Gly) (interchain with G-Cter in ubiquitin); alternate" evidence="1">
    <location>
        <position position="8"/>
    </location>
</feature>
<reference key="1">
    <citation type="submission" date="2005-08" db="EMBL/GenBank/DDBJ databases">
        <authorList>
            <consortium name="NIH - Mammalian Gene Collection (MGC) project"/>
        </authorList>
    </citation>
    <scope>NUCLEOTIDE SEQUENCE [LARGE SCALE MRNA]</scope>
    <source>
        <strain>Hereford</strain>
        <tissue>Uterus</tissue>
    </source>
</reference>
<comment type="function">
    <text evidence="1">Component of the small ribosomal subunit. The ribosome is a large ribonucleoprotein complex responsible for the synthesis of proteins in the cell.</text>
</comment>
<comment type="subunit">
    <text evidence="1">Component of the 40S small ribosomal subunit.</text>
</comment>
<comment type="subcellular location">
    <subcellularLocation>
        <location evidence="1">Cytoplasm</location>
    </subcellularLocation>
</comment>
<comment type="PTM">
    <text evidence="1">Polyubiquitinated by ZNF598 via 'Lys-63'-linked ubiquitin chains when a ribosome has stalled, initiating the ribosome quality control (RQC) pathway to degrade the potentially detrimental aberrant nascent polypeptide. Deubiquitinated by OTUD3 and USP21, antagonizing ZNF598 activity.</text>
</comment>
<comment type="PTM">
    <text evidence="2">Ufmylated by UFL1.</text>
</comment>
<comment type="similarity">
    <text evidence="3">Belongs to the universal ribosomal protein uS10 family.</text>
</comment>
<evidence type="ECO:0000250" key="1">
    <source>
        <dbReference type="UniProtKB" id="P60866"/>
    </source>
</evidence>
<evidence type="ECO:0000250" key="2">
    <source>
        <dbReference type="UniProtKB" id="P60867"/>
    </source>
</evidence>
<evidence type="ECO:0000305" key="3"/>
<organism>
    <name type="scientific">Bos taurus</name>
    <name type="common">Bovine</name>
    <dbReference type="NCBI Taxonomy" id="9913"/>
    <lineage>
        <taxon>Eukaryota</taxon>
        <taxon>Metazoa</taxon>
        <taxon>Chordata</taxon>
        <taxon>Craniata</taxon>
        <taxon>Vertebrata</taxon>
        <taxon>Euteleostomi</taxon>
        <taxon>Mammalia</taxon>
        <taxon>Eutheria</taxon>
        <taxon>Laurasiatheria</taxon>
        <taxon>Artiodactyla</taxon>
        <taxon>Ruminantia</taxon>
        <taxon>Pecora</taxon>
        <taxon>Bovidae</taxon>
        <taxon>Bovinae</taxon>
        <taxon>Bos</taxon>
    </lineage>
</organism>
<accession>Q3ZBH8</accession>
<dbReference type="EMBL" id="BC103289">
    <property type="protein sequence ID" value="AAI03290.1"/>
    <property type="molecule type" value="mRNA"/>
</dbReference>
<dbReference type="RefSeq" id="NP_001029610.1">
    <property type="nucleotide sequence ID" value="NM_001034438.1"/>
</dbReference>
<dbReference type="PDB" id="6MTD">
    <property type="method" value="EM"/>
    <property type="resolution" value="3.30 A"/>
    <property type="chains" value="UU=18-117"/>
</dbReference>
<dbReference type="PDB" id="6MTE">
    <property type="method" value="EM"/>
    <property type="resolution" value="3.40 A"/>
    <property type="chains" value="UU=18-117"/>
</dbReference>
<dbReference type="PDBsum" id="6MTD"/>
<dbReference type="PDBsum" id="6MTE"/>
<dbReference type="EMDB" id="EMD-9240"/>
<dbReference type="EMDB" id="EMD-9242"/>
<dbReference type="SMR" id="Q3ZBH8"/>
<dbReference type="FunCoup" id="Q3ZBH8">
    <property type="interactions" value="1511"/>
</dbReference>
<dbReference type="STRING" id="9913.ENSBTAP00000025484"/>
<dbReference type="PaxDb" id="9913-ENSBTAP00000025484"/>
<dbReference type="PeptideAtlas" id="Q3ZBH8"/>
<dbReference type="Ensembl" id="ENSBTAT00000025484.4">
    <property type="protein sequence ID" value="ENSBTAP00000025484.2"/>
    <property type="gene ID" value="ENSBTAG00000019147.4"/>
</dbReference>
<dbReference type="GeneID" id="513222"/>
<dbReference type="KEGG" id="bta:513222"/>
<dbReference type="CTD" id="6224"/>
<dbReference type="VEuPathDB" id="HostDB:ENSBTAG00000019147"/>
<dbReference type="VGNC" id="VGNC:34133">
    <property type="gene designation" value="RPS20"/>
</dbReference>
<dbReference type="eggNOG" id="KOG0900">
    <property type="taxonomic scope" value="Eukaryota"/>
</dbReference>
<dbReference type="GeneTree" id="ENSGT00390000003248"/>
<dbReference type="HOGENOM" id="CLU_122625_0_0_1"/>
<dbReference type="InParanoid" id="Q3ZBH8"/>
<dbReference type="OMA" id="WCEYRRR"/>
<dbReference type="OrthoDB" id="10248551at2759"/>
<dbReference type="TreeFam" id="TF300222"/>
<dbReference type="Reactome" id="R-BTA-156827">
    <property type="pathway name" value="L13a-mediated translational silencing of Ceruloplasmin expression"/>
</dbReference>
<dbReference type="Reactome" id="R-BTA-1799339">
    <property type="pathway name" value="SRP-dependent cotranslational protein targeting to membrane"/>
</dbReference>
<dbReference type="Reactome" id="R-BTA-6791226">
    <property type="pathway name" value="Major pathway of rRNA processing in the nucleolus and cytosol"/>
</dbReference>
<dbReference type="Reactome" id="R-BTA-72649">
    <property type="pathway name" value="Translation initiation complex formation"/>
</dbReference>
<dbReference type="Reactome" id="R-BTA-72689">
    <property type="pathway name" value="Formation of a pool of free 40S subunits"/>
</dbReference>
<dbReference type="Reactome" id="R-BTA-72695">
    <property type="pathway name" value="Formation of the ternary complex, and subsequently, the 43S complex"/>
</dbReference>
<dbReference type="Reactome" id="R-BTA-72702">
    <property type="pathway name" value="Ribosomal scanning and start codon recognition"/>
</dbReference>
<dbReference type="Reactome" id="R-BTA-72706">
    <property type="pathway name" value="GTP hydrolysis and joining of the 60S ribosomal subunit"/>
</dbReference>
<dbReference type="Reactome" id="R-BTA-975956">
    <property type="pathway name" value="Nonsense Mediated Decay (NMD) independent of the Exon Junction Complex (EJC)"/>
</dbReference>
<dbReference type="Reactome" id="R-BTA-975957">
    <property type="pathway name" value="Nonsense Mediated Decay (NMD) enhanced by the Exon Junction Complex (EJC)"/>
</dbReference>
<dbReference type="Proteomes" id="UP000009136">
    <property type="component" value="Chromosome 14"/>
</dbReference>
<dbReference type="Bgee" id="ENSBTAG00000019147">
    <property type="expression patterns" value="Expressed in isthmus of fallopian tube and 105 other cell types or tissues"/>
</dbReference>
<dbReference type="GO" id="GO:0022627">
    <property type="term" value="C:cytosolic small ribosomal subunit"/>
    <property type="evidence" value="ECO:0000318"/>
    <property type="project" value="GO_Central"/>
</dbReference>
<dbReference type="GO" id="GO:0003723">
    <property type="term" value="F:RNA binding"/>
    <property type="evidence" value="ECO:0007669"/>
    <property type="project" value="InterPro"/>
</dbReference>
<dbReference type="GO" id="GO:0003735">
    <property type="term" value="F:structural constituent of ribosome"/>
    <property type="evidence" value="ECO:0000318"/>
    <property type="project" value="GO_Central"/>
</dbReference>
<dbReference type="GO" id="GO:0006412">
    <property type="term" value="P:translation"/>
    <property type="evidence" value="ECO:0007669"/>
    <property type="project" value="InterPro"/>
</dbReference>
<dbReference type="FunFam" id="3.30.70.600:FF:000011">
    <property type="entry name" value="Uncharacterized protein"/>
    <property type="match status" value="1"/>
</dbReference>
<dbReference type="Gene3D" id="3.30.70.600">
    <property type="entry name" value="Ribosomal protein S10 domain"/>
    <property type="match status" value="1"/>
</dbReference>
<dbReference type="HAMAP" id="MF_00508">
    <property type="entry name" value="Ribosomal_uS10"/>
    <property type="match status" value="1"/>
</dbReference>
<dbReference type="InterPro" id="IPR001848">
    <property type="entry name" value="Ribosomal_uS10"/>
</dbReference>
<dbReference type="InterPro" id="IPR018268">
    <property type="entry name" value="Ribosomal_uS10_CS"/>
</dbReference>
<dbReference type="InterPro" id="IPR027486">
    <property type="entry name" value="Ribosomal_uS10_dom"/>
</dbReference>
<dbReference type="InterPro" id="IPR036838">
    <property type="entry name" value="Ribosomal_uS10_dom_sf"/>
</dbReference>
<dbReference type="InterPro" id="IPR005729">
    <property type="entry name" value="Ribosomal_uS10_euk/arc"/>
</dbReference>
<dbReference type="NCBIfam" id="TIGR01046">
    <property type="entry name" value="uS10_euk_arch"/>
    <property type="match status" value="1"/>
</dbReference>
<dbReference type="PANTHER" id="PTHR11700">
    <property type="entry name" value="30S RIBOSOMAL PROTEIN S10 FAMILY MEMBER"/>
    <property type="match status" value="1"/>
</dbReference>
<dbReference type="Pfam" id="PF00338">
    <property type="entry name" value="Ribosomal_S10"/>
    <property type="match status" value="1"/>
</dbReference>
<dbReference type="PRINTS" id="PR00971">
    <property type="entry name" value="RIBOSOMALS10"/>
</dbReference>
<dbReference type="SMART" id="SM01403">
    <property type="entry name" value="Ribosomal_S10"/>
    <property type="match status" value="1"/>
</dbReference>
<dbReference type="SUPFAM" id="SSF54999">
    <property type="entry name" value="Ribosomal protein S10"/>
    <property type="match status" value="1"/>
</dbReference>
<dbReference type="PROSITE" id="PS00361">
    <property type="entry name" value="RIBOSOMAL_S10"/>
    <property type="match status" value="1"/>
</dbReference>
<sequence length="119" mass="13373">MAFKDTGKTPVEPEVAIHRIRITLTSRNVKSLEKVCADLIRGAKEKNLKVKGPVRMPTKTLRITTRKTPCGEGSKTWDRFQMRIHKRLIDLHSPSEIVKQITSISIEPGVEVEVTIADA</sequence>
<proteinExistence type="evidence at protein level"/>
<name>RS20_BOVIN</name>
<protein>
    <recommendedName>
        <fullName evidence="3">Small ribosomal subunit protein uS10</fullName>
    </recommendedName>
    <alternativeName>
        <fullName>40S ribosomal protein S20</fullName>
    </alternativeName>
</protein>
<gene>
    <name type="primary">RPS20</name>
</gene>